<keyword id="KW-0665">Pyrimidine biosynthesis</keyword>
<keyword id="KW-0808">Transferase</keyword>
<comment type="function">
    <text evidence="1">Catalyzes the condensation of carbamoyl phosphate and aspartate to form carbamoyl aspartate and inorganic phosphate, the committed step in the de novo pyrimidine nucleotide biosynthesis pathway.</text>
</comment>
<comment type="catalytic activity">
    <reaction evidence="1">
        <text>carbamoyl phosphate + L-aspartate = N-carbamoyl-L-aspartate + phosphate + H(+)</text>
        <dbReference type="Rhea" id="RHEA:20013"/>
        <dbReference type="ChEBI" id="CHEBI:15378"/>
        <dbReference type="ChEBI" id="CHEBI:29991"/>
        <dbReference type="ChEBI" id="CHEBI:32814"/>
        <dbReference type="ChEBI" id="CHEBI:43474"/>
        <dbReference type="ChEBI" id="CHEBI:58228"/>
        <dbReference type="EC" id="2.1.3.2"/>
    </reaction>
</comment>
<comment type="pathway">
    <text evidence="1">Pyrimidine metabolism; UMP biosynthesis via de novo pathway; (S)-dihydroorotate from bicarbonate: step 2/3.</text>
</comment>
<comment type="subunit">
    <text evidence="1">Heterooligomer of catalytic and regulatory chains.</text>
</comment>
<comment type="similarity">
    <text evidence="1">Belongs to the aspartate/ornithine carbamoyltransferase superfamily. ATCase family.</text>
</comment>
<feature type="chain" id="PRO_0000321190" description="Aspartate carbamoyltransferase catalytic subunit">
    <location>
        <begin position="1"/>
        <end position="305"/>
    </location>
</feature>
<feature type="binding site" evidence="1">
    <location>
        <position position="54"/>
    </location>
    <ligand>
        <name>carbamoyl phosphate</name>
        <dbReference type="ChEBI" id="CHEBI:58228"/>
    </ligand>
</feature>
<feature type="binding site" evidence="1">
    <location>
        <position position="55"/>
    </location>
    <ligand>
        <name>carbamoyl phosphate</name>
        <dbReference type="ChEBI" id="CHEBI:58228"/>
    </ligand>
</feature>
<feature type="binding site" evidence="1">
    <location>
        <position position="83"/>
    </location>
    <ligand>
        <name>L-aspartate</name>
        <dbReference type="ChEBI" id="CHEBI:29991"/>
    </ligand>
</feature>
<feature type="binding site" evidence="1">
    <location>
        <position position="104"/>
    </location>
    <ligand>
        <name>carbamoyl phosphate</name>
        <dbReference type="ChEBI" id="CHEBI:58228"/>
    </ligand>
</feature>
<feature type="binding site" evidence="1">
    <location>
        <position position="132"/>
    </location>
    <ligand>
        <name>carbamoyl phosphate</name>
        <dbReference type="ChEBI" id="CHEBI:58228"/>
    </ligand>
</feature>
<feature type="binding site" evidence="1">
    <location>
        <position position="135"/>
    </location>
    <ligand>
        <name>carbamoyl phosphate</name>
        <dbReference type="ChEBI" id="CHEBI:58228"/>
    </ligand>
</feature>
<feature type="binding site" evidence="1">
    <location>
        <position position="165"/>
    </location>
    <ligand>
        <name>L-aspartate</name>
        <dbReference type="ChEBI" id="CHEBI:29991"/>
    </ligand>
</feature>
<feature type="binding site" evidence="1">
    <location>
        <position position="226"/>
    </location>
    <ligand>
        <name>L-aspartate</name>
        <dbReference type="ChEBI" id="CHEBI:29991"/>
    </ligand>
</feature>
<feature type="binding site" evidence="1">
    <location>
        <position position="265"/>
    </location>
    <ligand>
        <name>carbamoyl phosphate</name>
        <dbReference type="ChEBI" id="CHEBI:58228"/>
    </ligand>
</feature>
<feature type="binding site" evidence="1">
    <location>
        <position position="266"/>
    </location>
    <ligand>
        <name>carbamoyl phosphate</name>
        <dbReference type="ChEBI" id="CHEBI:58228"/>
    </ligand>
</feature>
<evidence type="ECO:0000255" key="1">
    <source>
        <dbReference type="HAMAP-Rule" id="MF_00001"/>
    </source>
</evidence>
<organism>
    <name type="scientific">Pyrobaculum arsenaticum (strain DSM 13514 / JCM 11321 / PZ6)</name>
    <dbReference type="NCBI Taxonomy" id="340102"/>
    <lineage>
        <taxon>Archaea</taxon>
        <taxon>Thermoproteota</taxon>
        <taxon>Thermoprotei</taxon>
        <taxon>Thermoproteales</taxon>
        <taxon>Thermoproteaceae</taxon>
        <taxon>Pyrobaculum</taxon>
    </lineage>
</organism>
<reference key="1">
    <citation type="submission" date="2007-04" db="EMBL/GenBank/DDBJ databases">
        <title>Complete sequence of Pyrobaculum arsenaticum DSM 13514.</title>
        <authorList>
            <consortium name="US DOE Joint Genome Institute"/>
            <person name="Copeland A."/>
            <person name="Lucas S."/>
            <person name="Lapidus A."/>
            <person name="Barry K."/>
            <person name="Glavina del Rio T."/>
            <person name="Dalin E."/>
            <person name="Tice H."/>
            <person name="Pitluck S."/>
            <person name="Chain P."/>
            <person name="Malfatti S."/>
            <person name="Shin M."/>
            <person name="Vergez L."/>
            <person name="Schmutz J."/>
            <person name="Larimer F."/>
            <person name="Land M."/>
            <person name="Hauser L."/>
            <person name="Kyrpides N."/>
            <person name="Mikhailova N."/>
            <person name="Cozen A.E."/>
            <person name="Fitz-Gibbon S.T."/>
            <person name="House C.H."/>
            <person name="Saltikov C."/>
            <person name="Lowe T.M."/>
            <person name="Richardson P."/>
        </authorList>
    </citation>
    <scope>NUCLEOTIDE SEQUENCE [LARGE SCALE GENOMIC DNA]</scope>
    <source>
        <strain>ATCC 700994 / DSM 13514 / JCM 11321 / PZ6</strain>
    </source>
</reference>
<proteinExistence type="inferred from homology"/>
<gene>
    <name evidence="1" type="primary">pyrB</name>
    <name type="ordered locus">Pars_0028</name>
</gene>
<dbReference type="EC" id="2.1.3.2" evidence="1"/>
<dbReference type="EMBL" id="CP000660">
    <property type="protein sequence ID" value="ABP49645.1"/>
    <property type="molecule type" value="Genomic_DNA"/>
</dbReference>
<dbReference type="SMR" id="A4WGX8"/>
<dbReference type="STRING" id="340102.Pars_0028"/>
<dbReference type="KEGG" id="pas:Pars_0028"/>
<dbReference type="HOGENOM" id="CLU_043846_1_2_2"/>
<dbReference type="OrthoDB" id="7792at2157"/>
<dbReference type="PhylomeDB" id="A4WGX8"/>
<dbReference type="UniPathway" id="UPA00070">
    <property type="reaction ID" value="UER00116"/>
</dbReference>
<dbReference type="Proteomes" id="UP000001567">
    <property type="component" value="Chromosome"/>
</dbReference>
<dbReference type="GO" id="GO:0016597">
    <property type="term" value="F:amino acid binding"/>
    <property type="evidence" value="ECO:0007669"/>
    <property type="project" value="InterPro"/>
</dbReference>
<dbReference type="GO" id="GO:0004070">
    <property type="term" value="F:aspartate carbamoyltransferase activity"/>
    <property type="evidence" value="ECO:0007669"/>
    <property type="project" value="UniProtKB-UniRule"/>
</dbReference>
<dbReference type="GO" id="GO:0006207">
    <property type="term" value="P:'de novo' pyrimidine nucleobase biosynthetic process"/>
    <property type="evidence" value="ECO:0007669"/>
    <property type="project" value="InterPro"/>
</dbReference>
<dbReference type="GO" id="GO:0044205">
    <property type="term" value="P:'de novo' UMP biosynthetic process"/>
    <property type="evidence" value="ECO:0007669"/>
    <property type="project" value="UniProtKB-UniRule"/>
</dbReference>
<dbReference type="GO" id="GO:0006520">
    <property type="term" value="P:amino acid metabolic process"/>
    <property type="evidence" value="ECO:0007669"/>
    <property type="project" value="InterPro"/>
</dbReference>
<dbReference type="FunFam" id="3.40.50.1370:FF:000001">
    <property type="entry name" value="Aspartate carbamoyltransferase"/>
    <property type="match status" value="1"/>
</dbReference>
<dbReference type="FunFam" id="3.40.50.1370:FF:000002">
    <property type="entry name" value="Aspartate carbamoyltransferase 2"/>
    <property type="match status" value="1"/>
</dbReference>
<dbReference type="Gene3D" id="3.40.50.1370">
    <property type="entry name" value="Aspartate/ornithine carbamoyltransferase"/>
    <property type="match status" value="2"/>
</dbReference>
<dbReference type="HAMAP" id="MF_00001">
    <property type="entry name" value="Asp_carb_tr"/>
    <property type="match status" value="1"/>
</dbReference>
<dbReference type="InterPro" id="IPR006132">
    <property type="entry name" value="Asp/Orn_carbamoyltranf_P-bd"/>
</dbReference>
<dbReference type="InterPro" id="IPR006130">
    <property type="entry name" value="Asp/Orn_carbamoylTrfase"/>
</dbReference>
<dbReference type="InterPro" id="IPR036901">
    <property type="entry name" value="Asp/Orn_carbamoylTrfase_sf"/>
</dbReference>
<dbReference type="InterPro" id="IPR002082">
    <property type="entry name" value="Asp_carbamoyltransf"/>
</dbReference>
<dbReference type="InterPro" id="IPR006131">
    <property type="entry name" value="Asp_carbamoyltransf_Asp/Orn-bd"/>
</dbReference>
<dbReference type="NCBIfam" id="TIGR00670">
    <property type="entry name" value="asp_carb_tr"/>
    <property type="match status" value="1"/>
</dbReference>
<dbReference type="NCBIfam" id="NF002032">
    <property type="entry name" value="PRK00856.1"/>
    <property type="match status" value="1"/>
</dbReference>
<dbReference type="PANTHER" id="PTHR45753:SF6">
    <property type="entry name" value="ASPARTATE CARBAMOYLTRANSFERASE"/>
    <property type="match status" value="1"/>
</dbReference>
<dbReference type="PANTHER" id="PTHR45753">
    <property type="entry name" value="ORNITHINE CARBAMOYLTRANSFERASE, MITOCHONDRIAL"/>
    <property type="match status" value="1"/>
</dbReference>
<dbReference type="Pfam" id="PF00185">
    <property type="entry name" value="OTCace"/>
    <property type="match status" value="1"/>
</dbReference>
<dbReference type="Pfam" id="PF02729">
    <property type="entry name" value="OTCace_N"/>
    <property type="match status" value="1"/>
</dbReference>
<dbReference type="PRINTS" id="PR00100">
    <property type="entry name" value="AOTCASE"/>
</dbReference>
<dbReference type="PRINTS" id="PR00101">
    <property type="entry name" value="ATCASE"/>
</dbReference>
<dbReference type="SUPFAM" id="SSF53671">
    <property type="entry name" value="Aspartate/ornithine carbamoyltransferase"/>
    <property type="match status" value="1"/>
</dbReference>
<dbReference type="PROSITE" id="PS00097">
    <property type="entry name" value="CARBAMOYLTRANSFERASE"/>
    <property type="match status" value="1"/>
</dbReference>
<sequence length="305" mass="34885">MWRGRDVITMRDFGRGELEELFETAKYMEKYAKSRVDFLKGKIMAVAFFEPSTRTRLSFETAMRRLGGDVIGFWGAEGTSVEKGETLADTIRMLDAYSNIIVIRHKLEGAAKLAAEVAESPVINGGDGAFNHPTQAMLDLYTIWREFGHIDGLNIGLMGDLRYARTINSLLEALANFDVRTFLISPEYLRPRAETLDYVKSRGLKLSFHTNVEEVIHELDVLYVVRVQRERFLDPLEYERVKGSYRVTLEILKKAKKHLAILHPLPRVDEIDHRLDNTPHAKYFKQAALGVPLRMALIYLILSQP</sequence>
<name>PYRB_PYRAR</name>
<protein>
    <recommendedName>
        <fullName evidence="1">Aspartate carbamoyltransferase catalytic subunit</fullName>
        <ecNumber evidence="1">2.1.3.2</ecNumber>
    </recommendedName>
    <alternativeName>
        <fullName evidence="1">Aspartate transcarbamylase</fullName>
        <shortName evidence="1">ATCase</shortName>
    </alternativeName>
</protein>
<accession>A4WGX8</accession>